<keyword id="KW-0002">3D-structure</keyword>
<keyword id="KW-1217">Cell adhesion impairing toxin</keyword>
<keyword id="KW-0903">Direct protein sequencing</keyword>
<keyword id="KW-1015">Disulfide bond</keyword>
<keyword id="KW-1199">Hemostasis impairing toxin</keyword>
<keyword id="KW-1201">Platelet aggregation inhibiting toxin</keyword>
<keyword id="KW-0964">Secreted</keyword>
<keyword id="KW-0800">Toxin</keyword>
<feature type="chain" id="PRO_0000101810" description="Disintegrin triflavin">
    <location>
        <begin position="1"/>
        <end position="70"/>
    </location>
</feature>
<feature type="domain" description="Disintegrin" evidence="2">
    <location>
        <begin position="1"/>
        <end position="70"/>
    </location>
</feature>
<feature type="short sequence motif" description="Cell attachment site">
    <location>
        <begin position="49"/>
        <end position="51"/>
    </location>
</feature>
<feature type="disulfide bond" evidence="3 9">
    <location>
        <begin position="4"/>
        <end position="19"/>
    </location>
</feature>
<feature type="disulfide bond" evidence="3 9">
    <location>
        <begin position="6"/>
        <end position="14"/>
    </location>
</feature>
<feature type="disulfide bond" evidence="3 9">
    <location>
        <begin position="13"/>
        <end position="36"/>
    </location>
</feature>
<feature type="disulfide bond" evidence="3 9">
    <location>
        <begin position="27"/>
        <end position="33"/>
    </location>
</feature>
<feature type="disulfide bond" evidence="3 9">
    <location>
        <begin position="32"/>
        <end position="57"/>
    </location>
</feature>
<feature type="disulfide bond" evidence="2 3 9">
    <location>
        <begin position="45"/>
        <end position="64"/>
    </location>
</feature>
<feature type="turn" evidence="10">
    <location>
        <begin position="16"/>
        <end position="18"/>
    </location>
</feature>
<feature type="strand" evidence="10">
    <location>
        <begin position="19"/>
        <end position="21"/>
    </location>
</feature>
<feature type="strand" evidence="10">
    <location>
        <begin position="28"/>
        <end position="30"/>
    </location>
</feature>
<feature type="strand" evidence="10">
    <location>
        <begin position="44"/>
        <end position="46"/>
    </location>
</feature>
<feature type="strand" evidence="10">
    <location>
        <begin position="49"/>
        <end position="52"/>
    </location>
</feature>
<dbReference type="PIR" id="A58649">
    <property type="entry name" value="A58649"/>
</dbReference>
<dbReference type="PDB" id="1J2L">
    <property type="method" value="X-ray"/>
    <property type="resolution" value="1.70 A"/>
    <property type="chains" value="A=1-70"/>
</dbReference>
<dbReference type="PDBsum" id="1J2L"/>
<dbReference type="SMR" id="P21859"/>
<dbReference type="EvolutionaryTrace" id="P21859"/>
<dbReference type="GO" id="GO:0005576">
    <property type="term" value="C:extracellular region"/>
    <property type="evidence" value="ECO:0007669"/>
    <property type="project" value="UniProtKB-SubCell"/>
</dbReference>
<dbReference type="GO" id="GO:0090729">
    <property type="term" value="F:toxin activity"/>
    <property type="evidence" value="ECO:0007669"/>
    <property type="project" value="UniProtKB-KW"/>
</dbReference>
<dbReference type="FunFam" id="4.10.70.10:FF:000005">
    <property type="entry name" value="Zinc metalloproteinase/disintegrin"/>
    <property type="match status" value="1"/>
</dbReference>
<dbReference type="Gene3D" id="4.10.70.10">
    <property type="entry name" value="Disintegrin domain"/>
    <property type="match status" value="1"/>
</dbReference>
<dbReference type="InterPro" id="IPR018358">
    <property type="entry name" value="Disintegrin_CS"/>
</dbReference>
<dbReference type="InterPro" id="IPR001762">
    <property type="entry name" value="Disintegrin_dom"/>
</dbReference>
<dbReference type="InterPro" id="IPR036436">
    <property type="entry name" value="Disintegrin_dom_sf"/>
</dbReference>
<dbReference type="PANTHER" id="PTHR11905">
    <property type="entry name" value="ADAM A DISINTEGRIN AND METALLOPROTEASE DOMAIN"/>
    <property type="match status" value="1"/>
</dbReference>
<dbReference type="PANTHER" id="PTHR11905:SF159">
    <property type="entry name" value="ADAM METALLOPROTEASE"/>
    <property type="match status" value="1"/>
</dbReference>
<dbReference type="Pfam" id="PF00200">
    <property type="entry name" value="Disintegrin"/>
    <property type="match status" value="1"/>
</dbReference>
<dbReference type="PRINTS" id="PR00289">
    <property type="entry name" value="DISINTEGRIN"/>
</dbReference>
<dbReference type="SMART" id="SM00050">
    <property type="entry name" value="DISIN"/>
    <property type="match status" value="1"/>
</dbReference>
<dbReference type="SUPFAM" id="SSF57552">
    <property type="entry name" value="Blood coagulation inhibitor (disintegrin)"/>
    <property type="match status" value="1"/>
</dbReference>
<dbReference type="PROSITE" id="PS00427">
    <property type="entry name" value="DISINTEGRIN_1"/>
    <property type="match status" value="1"/>
</dbReference>
<dbReference type="PROSITE" id="PS50214">
    <property type="entry name" value="DISINTEGRIN_2"/>
    <property type="match status" value="1"/>
</dbReference>
<reference key="1">
    <citation type="journal article" date="1991" name="J. Biochem.">
        <title>Triflavin, an antiplatelet Arg-Gly-Asp-containing peptide, is a specific antagonist of platelet membrane glycoprotein IIb-IIIa complex.</title>
        <authorList>
            <person name="Huang T.-F."/>
            <person name="Sheu J.-R."/>
            <person name="Teng C.-M."/>
            <person name="Chen S.-W."/>
            <person name="Liu C.-S."/>
        </authorList>
    </citation>
    <scope>PROTEIN SEQUENCE</scope>
    <scope>SUBCELLULAR LOCATION</scope>
    <source>
        <tissue>Venom</tissue>
    </source>
</reference>
<reference key="2">
    <citation type="journal article" date="1991" name="Biochem. J.">
        <title>A potent antiplatelet peptide, triflavin, from Trimeresurus flavoviridis snake venom.</title>
        <authorList>
            <person name="Huang T.-F."/>
            <person name="Sheu J.-R."/>
            <person name="Teng C.-M."/>
        </authorList>
    </citation>
    <scope>PROTEIN SEQUENCE OF 1-17</scope>
    <scope>SUBCELLULAR LOCATION</scope>
    <source>
        <tissue>Venom</tissue>
    </source>
</reference>
<reference key="3">
    <citation type="journal article" date="2003" name="J. Mol. Biol.">
        <title>Crystal structure of trimestatin, a disintegrin containing a cell adhesion recognition motif RGD.</title>
        <authorList>
            <person name="Fujii Y."/>
            <person name="Okuda D."/>
            <person name="Fujimoto Z."/>
            <person name="Horii K."/>
            <person name="Morita T."/>
            <person name="Mizuno H."/>
        </authorList>
    </citation>
    <scope>X-RAY CRYSTALLOGRAPHY (1.7 ANGSTROMS)</scope>
    <scope>DISULFIDE BONDS</scope>
</reference>
<sequence>GEECDCGSPSNPCCDAATCKLRPGAQCADGLCCDQCRFKKKRTICRIARGDFPDDRCTGQSADCPRWNGL</sequence>
<organism>
    <name type="scientific">Protobothrops flavoviridis</name>
    <name type="common">Habu</name>
    <name type="synonym">Trimeresurus flavoviridis</name>
    <dbReference type="NCBI Taxonomy" id="88087"/>
    <lineage>
        <taxon>Eukaryota</taxon>
        <taxon>Metazoa</taxon>
        <taxon>Chordata</taxon>
        <taxon>Craniata</taxon>
        <taxon>Vertebrata</taxon>
        <taxon>Euteleostomi</taxon>
        <taxon>Lepidosauria</taxon>
        <taxon>Squamata</taxon>
        <taxon>Bifurcata</taxon>
        <taxon>Unidentata</taxon>
        <taxon>Episquamata</taxon>
        <taxon>Toxicofera</taxon>
        <taxon>Serpentes</taxon>
        <taxon>Colubroidea</taxon>
        <taxon>Viperidae</taxon>
        <taxon>Crotalinae</taxon>
        <taxon>Protobothrops</taxon>
    </lineage>
</organism>
<proteinExistence type="evidence at protein level"/>
<comment type="function">
    <text>Inhibits fibrinogen interaction with platelets. Acts by binding to alpha-IIb/beta-3 (ITGA2B/ITGB3) on the platelet surface and inhibits aggregation induced by ADP, thrombin, platelet-activating factor and collagen.</text>
</comment>
<comment type="subunit">
    <text evidence="1">Monomer.</text>
</comment>
<comment type="subcellular location">
    <subcellularLocation>
        <location evidence="4 5">Secreted</location>
    </subcellularLocation>
</comment>
<comment type="tissue specificity">
    <text evidence="7 8">Expressed by the venom gland.</text>
</comment>
<comment type="miscellaneous">
    <text>The disintegrin belongs to the medium disintegrin subfamily.</text>
</comment>
<comment type="similarity">
    <text evidence="6">Belongs to the venom metalloproteinase (M12B) family. P-II subfamily. P-IIa sub-subfamily.</text>
</comment>
<evidence type="ECO:0000250" key="1"/>
<evidence type="ECO:0000255" key="2">
    <source>
        <dbReference type="PROSITE-ProRule" id="PRU00068"/>
    </source>
</evidence>
<evidence type="ECO:0000269" key="3">
    <source>
    </source>
</evidence>
<evidence type="ECO:0000269" key="4">
    <source>
    </source>
</evidence>
<evidence type="ECO:0000269" key="5">
    <source>
    </source>
</evidence>
<evidence type="ECO:0000305" key="6"/>
<evidence type="ECO:0000305" key="7">
    <source>
    </source>
</evidence>
<evidence type="ECO:0000305" key="8">
    <source>
    </source>
</evidence>
<evidence type="ECO:0007744" key="9">
    <source>
        <dbReference type="PDB" id="1J2L"/>
    </source>
</evidence>
<evidence type="ECO:0007829" key="10">
    <source>
        <dbReference type="PDB" id="1J2L"/>
    </source>
</evidence>
<accession>P21859</accession>
<protein>
    <recommendedName>
        <fullName>Disintegrin triflavin</fullName>
    </recommendedName>
    <alternativeName>
        <fullName>Platelet aggregation activation inhibitor</fullName>
    </alternativeName>
    <alternativeName>
        <fullName>RGD-containing peptide</fullName>
    </alternativeName>
    <alternativeName>
        <fullName>Trimestatin</fullName>
    </alternativeName>
</protein>
<name>VM2T_PROFL</name>